<sequence length="49" mass="5925">MRVNITLEHKESGERLYLTSKNKRNTPDRLQLKKYSPKLRKHVIFTEVK</sequence>
<evidence type="ECO:0000255" key="1">
    <source>
        <dbReference type="HAMAP-Rule" id="MF_00294"/>
    </source>
</evidence>
<evidence type="ECO:0000305" key="2"/>
<proteinExistence type="inferred from homology"/>
<name>RL33_STRS2</name>
<comment type="similarity">
    <text evidence="1">Belongs to the bacterial ribosomal protein bL33 family.</text>
</comment>
<protein>
    <recommendedName>
        <fullName evidence="1">Large ribosomal subunit protein bL33</fullName>
    </recommendedName>
    <alternativeName>
        <fullName evidence="2">50S ribosomal protein L33</fullName>
    </alternativeName>
</protein>
<keyword id="KW-0687">Ribonucleoprotein</keyword>
<keyword id="KW-0689">Ribosomal protein</keyword>
<feature type="chain" id="PRO_0000356741" description="Large ribosomal subunit protein bL33">
    <location>
        <begin position="1"/>
        <end position="49"/>
    </location>
</feature>
<reference key="1">
    <citation type="journal article" date="2007" name="PLoS ONE">
        <title>A glimpse of streptococcal toxic shock syndrome from comparative genomics of S. suis 2 Chinese isolates.</title>
        <authorList>
            <person name="Chen C."/>
            <person name="Tang J."/>
            <person name="Dong W."/>
            <person name="Wang C."/>
            <person name="Feng Y."/>
            <person name="Wang J."/>
            <person name="Zheng F."/>
            <person name="Pan X."/>
            <person name="Liu D."/>
            <person name="Li M."/>
            <person name="Song Y."/>
            <person name="Zhu X."/>
            <person name="Sun H."/>
            <person name="Feng T."/>
            <person name="Guo Z."/>
            <person name="Ju A."/>
            <person name="Ge J."/>
            <person name="Dong Y."/>
            <person name="Sun W."/>
            <person name="Jiang Y."/>
            <person name="Wang J."/>
            <person name="Yan J."/>
            <person name="Yang H."/>
            <person name="Wang X."/>
            <person name="Gao G.F."/>
            <person name="Yang R."/>
            <person name="Wang J."/>
            <person name="Yu J."/>
        </authorList>
    </citation>
    <scope>NUCLEOTIDE SEQUENCE [LARGE SCALE GENOMIC DNA]</scope>
    <source>
        <strain>98HAH33</strain>
    </source>
</reference>
<dbReference type="EMBL" id="CP000408">
    <property type="protein sequence ID" value="ABP91429.1"/>
    <property type="molecule type" value="Genomic_DNA"/>
</dbReference>
<dbReference type="SMR" id="A4VZ90"/>
<dbReference type="KEGG" id="ssv:SSU98_0271"/>
<dbReference type="HOGENOM" id="CLU_190949_3_2_9"/>
<dbReference type="GO" id="GO:0005737">
    <property type="term" value="C:cytoplasm"/>
    <property type="evidence" value="ECO:0007669"/>
    <property type="project" value="UniProtKB-ARBA"/>
</dbReference>
<dbReference type="GO" id="GO:1990904">
    <property type="term" value="C:ribonucleoprotein complex"/>
    <property type="evidence" value="ECO:0007669"/>
    <property type="project" value="UniProtKB-KW"/>
</dbReference>
<dbReference type="GO" id="GO:0005840">
    <property type="term" value="C:ribosome"/>
    <property type="evidence" value="ECO:0007669"/>
    <property type="project" value="UniProtKB-KW"/>
</dbReference>
<dbReference type="GO" id="GO:0003735">
    <property type="term" value="F:structural constituent of ribosome"/>
    <property type="evidence" value="ECO:0007669"/>
    <property type="project" value="InterPro"/>
</dbReference>
<dbReference type="GO" id="GO:0006412">
    <property type="term" value="P:translation"/>
    <property type="evidence" value="ECO:0007669"/>
    <property type="project" value="UniProtKB-UniRule"/>
</dbReference>
<dbReference type="Gene3D" id="2.20.28.120">
    <property type="entry name" value="Ribosomal protein L33"/>
    <property type="match status" value="1"/>
</dbReference>
<dbReference type="HAMAP" id="MF_00294">
    <property type="entry name" value="Ribosomal_bL33"/>
    <property type="match status" value="1"/>
</dbReference>
<dbReference type="InterPro" id="IPR001705">
    <property type="entry name" value="Ribosomal_bL33"/>
</dbReference>
<dbReference type="InterPro" id="IPR018264">
    <property type="entry name" value="Ribosomal_bL33_CS"/>
</dbReference>
<dbReference type="InterPro" id="IPR038584">
    <property type="entry name" value="Ribosomal_bL33_sf"/>
</dbReference>
<dbReference type="InterPro" id="IPR011332">
    <property type="entry name" value="Ribosomal_zn-bd"/>
</dbReference>
<dbReference type="NCBIfam" id="NF001764">
    <property type="entry name" value="PRK00504.1"/>
    <property type="match status" value="1"/>
</dbReference>
<dbReference type="NCBIfam" id="NF001860">
    <property type="entry name" value="PRK00595.1"/>
    <property type="match status" value="1"/>
</dbReference>
<dbReference type="NCBIfam" id="TIGR01023">
    <property type="entry name" value="rpmG_bact"/>
    <property type="match status" value="1"/>
</dbReference>
<dbReference type="PANTHER" id="PTHR43168">
    <property type="entry name" value="50S RIBOSOMAL PROTEIN L33, CHLOROPLASTIC"/>
    <property type="match status" value="1"/>
</dbReference>
<dbReference type="PANTHER" id="PTHR43168:SF2">
    <property type="entry name" value="LARGE RIBOSOMAL SUBUNIT PROTEIN BL33C"/>
    <property type="match status" value="1"/>
</dbReference>
<dbReference type="Pfam" id="PF00471">
    <property type="entry name" value="Ribosomal_L33"/>
    <property type="match status" value="1"/>
</dbReference>
<dbReference type="SUPFAM" id="SSF57829">
    <property type="entry name" value="Zn-binding ribosomal proteins"/>
    <property type="match status" value="1"/>
</dbReference>
<dbReference type="PROSITE" id="PS00582">
    <property type="entry name" value="RIBOSOMAL_L33"/>
    <property type="match status" value="1"/>
</dbReference>
<organism>
    <name type="scientific">Streptococcus suis (strain 98HAH33)</name>
    <dbReference type="NCBI Taxonomy" id="391296"/>
    <lineage>
        <taxon>Bacteria</taxon>
        <taxon>Bacillati</taxon>
        <taxon>Bacillota</taxon>
        <taxon>Bacilli</taxon>
        <taxon>Lactobacillales</taxon>
        <taxon>Streptococcaceae</taxon>
        <taxon>Streptococcus</taxon>
    </lineage>
</organism>
<gene>
    <name evidence="1" type="primary">rpmG</name>
    <name type="ordered locus">SSU98_0271</name>
</gene>
<accession>A4VZ90</accession>